<organism>
    <name type="scientific">Vibrio cholerae serotype O1 (strain ATCC 39541 / Classical Ogawa 395 / O395)</name>
    <dbReference type="NCBI Taxonomy" id="345073"/>
    <lineage>
        <taxon>Bacteria</taxon>
        <taxon>Pseudomonadati</taxon>
        <taxon>Pseudomonadota</taxon>
        <taxon>Gammaproteobacteria</taxon>
        <taxon>Vibrionales</taxon>
        <taxon>Vibrionaceae</taxon>
        <taxon>Vibrio</taxon>
    </lineage>
</organism>
<sequence>MLCSIYKSPKKEGTYLYIPKRDDFSQVPDTLKQMFGKPIFVMLVNLEQRQLAQVNVEKVKQSMQEQGFFLQLPPPPENLLEQHKERKARQTP</sequence>
<gene>
    <name type="ordered locus">VC0395_A1544</name>
    <name type="ordered locus">VC395_2072</name>
</gene>
<protein>
    <recommendedName>
        <fullName evidence="1">YcgL domain-containing protein VC0395_A1544/VC395_2072</fullName>
    </recommendedName>
</protein>
<proteinExistence type="inferred from homology"/>
<accession>A5F6U8</accession>
<accession>C3M209</accession>
<reference key="1">
    <citation type="submission" date="2007-03" db="EMBL/GenBank/DDBJ databases">
        <authorList>
            <person name="Heidelberg J."/>
        </authorList>
    </citation>
    <scope>NUCLEOTIDE SEQUENCE [LARGE SCALE GENOMIC DNA]</scope>
    <source>
        <strain>ATCC 39541 / Classical Ogawa 395 / O395</strain>
    </source>
</reference>
<reference key="2">
    <citation type="journal article" date="2008" name="PLoS ONE">
        <title>A recalibrated molecular clock and independent origins for the cholera pandemic clones.</title>
        <authorList>
            <person name="Feng L."/>
            <person name="Reeves P.R."/>
            <person name="Lan R."/>
            <person name="Ren Y."/>
            <person name="Gao C."/>
            <person name="Zhou Z."/>
            <person name="Ren Y."/>
            <person name="Cheng J."/>
            <person name="Wang W."/>
            <person name="Wang J."/>
            <person name="Qian W."/>
            <person name="Li D."/>
            <person name="Wang L."/>
        </authorList>
    </citation>
    <scope>NUCLEOTIDE SEQUENCE [LARGE SCALE GENOMIC DNA]</scope>
    <source>
        <strain>ATCC 39541 / Classical Ogawa 395 / O395</strain>
    </source>
</reference>
<feature type="chain" id="PRO_0000375394" description="YcgL domain-containing protein VC0395_A1544/VC395_2072">
    <location>
        <begin position="1"/>
        <end position="92"/>
    </location>
</feature>
<feature type="domain" description="YcgL" evidence="1">
    <location>
        <begin position="1"/>
        <end position="84"/>
    </location>
</feature>
<feature type="region of interest" description="Disordered" evidence="2">
    <location>
        <begin position="71"/>
        <end position="92"/>
    </location>
</feature>
<name>Y2744_VIBC3</name>
<evidence type="ECO:0000255" key="1">
    <source>
        <dbReference type="HAMAP-Rule" id="MF_01866"/>
    </source>
</evidence>
<evidence type="ECO:0000256" key="2">
    <source>
        <dbReference type="SAM" id="MobiDB-lite"/>
    </source>
</evidence>
<evidence type="ECO:0000305" key="3"/>
<dbReference type="EMBL" id="CP000627">
    <property type="protein sequence ID" value="ABQ20895.1"/>
    <property type="status" value="ALT_INIT"/>
    <property type="molecule type" value="Genomic_DNA"/>
</dbReference>
<dbReference type="EMBL" id="CP001235">
    <property type="protein sequence ID" value="ACP10064.1"/>
    <property type="status" value="ALT_INIT"/>
    <property type="molecule type" value="Genomic_DNA"/>
</dbReference>
<dbReference type="RefSeq" id="WP_000882651.1">
    <property type="nucleotide sequence ID" value="NZ_JAACZH010000001.1"/>
</dbReference>
<dbReference type="SMR" id="A5F6U8"/>
<dbReference type="KEGG" id="vco:VC0395_A1544"/>
<dbReference type="KEGG" id="vcr:VC395_2072"/>
<dbReference type="PATRIC" id="fig|345073.21.peg.2001"/>
<dbReference type="eggNOG" id="COG3100">
    <property type="taxonomic scope" value="Bacteria"/>
</dbReference>
<dbReference type="HOGENOM" id="CLU_155118_1_0_6"/>
<dbReference type="OrthoDB" id="7062382at2"/>
<dbReference type="Proteomes" id="UP000000249">
    <property type="component" value="Chromosome 2"/>
</dbReference>
<dbReference type="Gene3D" id="3.10.510.20">
    <property type="entry name" value="YcgL domain"/>
    <property type="match status" value="1"/>
</dbReference>
<dbReference type="HAMAP" id="MF_01866">
    <property type="entry name" value="UPF0745"/>
    <property type="match status" value="1"/>
</dbReference>
<dbReference type="InterPro" id="IPR038068">
    <property type="entry name" value="YcgL-like_sf"/>
</dbReference>
<dbReference type="InterPro" id="IPR027354">
    <property type="entry name" value="YcgL_dom"/>
</dbReference>
<dbReference type="PANTHER" id="PTHR38109">
    <property type="entry name" value="PROTEIN YCGL"/>
    <property type="match status" value="1"/>
</dbReference>
<dbReference type="PANTHER" id="PTHR38109:SF1">
    <property type="entry name" value="PROTEIN YCGL"/>
    <property type="match status" value="1"/>
</dbReference>
<dbReference type="Pfam" id="PF05166">
    <property type="entry name" value="YcgL"/>
    <property type="match status" value="1"/>
</dbReference>
<dbReference type="SUPFAM" id="SSF160191">
    <property type="entry name" value="YcgL-like"/>
    <property type="match status" value="1"/>
</dbReference>
<dbReference type="PROSITE" id="PS51648">
    <property type="entry name" value="YCGL"/>
    <property type="match status" value="1"/>
</dbReference>
<comment type="sequence caution" evidence="3">
    <conflict type="erroneous initiation">
        <sequence resource="EMBL-CDS" id="ABQ20895"/>
    </conflict>
</comment>
<comment type="sequence caution" evidence="3">
    <conflict type="erroneous initiation">
        <sequence resource="EMBL-CDS" id="ACP10064"/>
    </conflict>
</comment>